<reference key="1">
    <citation type="journal article" date="2004" name="J. Bacteriol.">
        <title>The genome sequence of Mycoplasma hyopneumoniae strain 232, the agent of swine mycoplasmosis.</title>
        <authorList>
            <person name="Minion F.C."/>
            <person name="Lefkowitz E.J."/>
            <person name="Madsen M.L."/>
            <person name="Cleary B.J."/>
            <person name="Swartzell S.M."/>
            <person name="Mahairas G.G."/>
        </authorList>
    </citation>
    <scope>NUCLEOTIDE SEQUENCE [LARGE SCALE GENOMIC DNA]</scope>
    <source>
        <strain>232</strain>
    </source>
</reference>
<dbReference type="EMBL" id="AE017332">
    <property type="protein sequence ID" value="AAV27703.1"/>
    <property type="molecule type" value="Genomic_DNA"/>
</dbReference>
<dbReference type="RefSeq" id="WP_011205922.1">
    <property type="nucleotide sequence ID" value="NC_006360.1"/>
</dbReference>
<dbReference type="SMR" id="Q601W7"/>
<dbReference type="GeneID" id="41334362"/>
<dbReference type="KEGG" id="mhy:mhp084"/>
<dbReference type="eggNOG" id="COG0049">
    <property type="taxonomic scope" value="Bacteria"/>
</dbReference>
<dbReference type="HOGENOM" id="CLU_072226_1_1_14"/>
<dbReference type="PhylomeDB" id="Q601W7"/>
<dbReference type="Proteomes" id="UP000006822">
    <property type="component" value="Chromosome"/>
</dbReference>
<dbReference type="GO" id="GO:0015935">
    <property type="term" value="C:small ribosomal subunit"/>
    <property type="evidence" value="ECO:0007669"/>
    <property type="project" value="InterPro"/>
</dbReference>
<dbReference type="GO" id="GO:0019843">
    <property type="term" value="F:rRNA binding"/>
    <property type="evidence" value="ECO:0007669"/>
    <property type="project" value="UniProtKB-UniRule"/>
</dbReference>
<dbReference type="GO" id="GO:0003735">
    <property type="term" value="F:structural constituent of ribosome"/>
    <property type="evidence" value="ECO:0007669"/>
    <property type="project" value="InterPro"/>
</dbReference>
<dbReference type="GO" id="GO:0000049">
    <property type="term" value="F:tRNA binding"/>
    <property type="evidence" value="ECO:0007669"/>
    <property type="project" value="UniProtKB-UniRule"/>
</dbReference>
<dbReference type="GO" id="GO:0006412">
    <property type="term" value="P:translation"/>
    <property type="evidence" value="ECO:0007669"/>
    <property type="project" value="UniProtKB-UniRule"/>
</dbReference>
<dbReference type="CDD" id="cd14869">
    <property type="entry name" value="uS7_Bacteria"/>
    <property type="match status" value="1"/>
</dbReference>
<dbReference type="FunFam" id="1.10.455.10:FF:000001">
    <property type="entry name" value="30S ribosomal protein S7"/>
    <property type="match status" value="1"/>
</dbReference>
<dbReference type="Gene3D" id="1.10.455.10">
    <property type="entry name" value="Ribosomal protein S7 domain"/>
    <property type="match status" value="1"/>
</dbReference>
<dbReference type="HAMAP" id="MF_00480_B">
    <property type="entry name" value="Ribosomal_uS7_B"/>
    <property type="match status" value="1"/>
</dbReference>
<dbReference type="InterPro" id="IPR000235">
    <property type="entry name" value="Ribosomal_uS7"/>
</dbReference>
<dbReference type="InterPro" id="IPR005717">
    <property type="entry name" value="Ribosomal_uS7_bac/org-type"/>
</dbReference>
<dbReference type="InterPro" id="IPR020606">
    <property type="entry name" value="Ribosomal_uS7_CS"/>
</dbReference>
<dbReference type="InterPro" id="IPR023798">
    <property type="entry name" value="Ribosomal_uS7_dom"/>
</dbReference>
<dbReference type="InterPro" id="IPR036823">
    <property type="entry name" value="Ribosomal_uS7_dom_sf"/>
</dbReference>
<dbReference type="NCBIfam" id="TIGR01029">
    <property type="entry name" value="rpsG_bact"/>
    <property type="match status" value="1"/>
</dbReference>
<dbReference type="PANTHER" id="PTHR11205">
    <property type="entry name" value="RIBOSOMAL PROTEIN S7"/>
    <property type="match status" value="1"/>
</dbReference>
<dbReference type="Pfam" id="PF00177">
    <property type="entry name" value="Ribosomal_S7"/>
    <property type="match status" value="1"/>
</dbReference>
<dbReference type="PIRSF" id="PIRSF002122">
    <property type="entry name" value="RPS7p_RPS7a_RPS5e_RPS7o"/>
    <property type="match status" value="1"/>
</dbReference>
<dbReference type="SUPFAM" id="SSF47973">
    <property type="entry name" value="Ribosomal protein S7"/>
    <property type="match status" value="1"/>
</dbReference>
<dbReference type="PROSITE" id="PS00052">
    <property type="entry name" value="RIBOSOMAL_S7"/>
    <property type="match status" value="1"/>
</dbReference>
<feature type="chain" id="PRO_0000124296" description="Small ribosomal subunit protein uS7">
    <location>
        <begin position="1"/>
        <end position="156"/>
    </location>
</feature>
<comment type="function">
    <text evidence="1">One of the primary rRNA binding proteins, it binds directly to 16S rRNA where it nucleates assembly of the head domain of the 30S subunit. Is located at the subunit interface close to the decoding center, probably blocks exit of the E-site tRNA.</text>
</comment>
<comment type="subunit">
    <text evidence="1">Part of the 30S ribosomal subunit. Contacts proteins S9 and S11.</text>
</comment>
<comment type="similarity">
    <text evidence="1">Belongs to the universal ribosomal protein uS7 family.</text>
</comment>
<organism>
    <name type="scientific">Mesomycoplasma hyopneumoniae (strain 232)</name>
    <name type="common">Mycoplasma hyopneumoniae</name>
    <dbReference type="NCBI Taxonomy" id="295358"/>
    <lineage>
        <taxon>Bacteria</taxon>
        <taxon>Bacillati</taxon>
        <taxon>Mycoplasmatota</taxon>
        <taxon>Mycoplasmoidales</taxon>
        <taxon>Metamycoplasmataceae</taxon>
        <taxon>Mesomycoplasma</taxon>
    </lineage>
</organism>
<accession>Q601W7</accession>
<keyword id="KW-0687">Ribonucleoprotein</keyword>
<keyword id="KW-0689">Ribosomal protein</keyword>
<keyword id="KW-0694">RNA-binding</keyword>
<keyword id="KW-0699">rRNA-binding</keyword>
<keyword id="KW-0820">tRNA-binding</keyword>
<gene>
    <name evidence="1" type="primary">rpsG</name>
    <name type="ordered locus">mhp084</name>
</gene>
<proteinExistence type="inferred from homology"/>
<sequence length="156" mass="18037">MSRKKQAPVRNVLADPVFNSKLITKAINCTMLEGKKTTAQNILYSAFKLVEEKLQKDALEVFRQAVKNVTPLTEVRSRRIGGTNYQVPMEVRQKRQQTLALRWLILFARKRNEKTMIVKLANEIIDAYNKTGGAFKKKEDTHKMAEANRAFAHFKW</sequence>
<name>RS7_MESH2</name>
<evidence type="ECO:0000255" key="1">
    <source>
        <dbReference type="HAMAP-Rule" id="MF_00480"/>
    </source>
</evidence>
<evidence type="ECO:0000305" key="2"/>
<protein>
    <recommendedName>
        <fullName evidence="1">Small ribosomal subunit protein uS7</fullName>
    </recommendedName>
    <alternativeName>
        <fullName evidence="2">30S ribosomal protein S7</fullName>
    </alternativeName>
</protein>